<keyword id="KW-1185">Reference proteome</keyword>
<proteinExistence type="evidence at transcript level"/>
<reference key="1">
    <citation type="journal article" date="2005" name="Nature">
        <title>The genome of the social amoeba Dictyostelium discoideum.</title>
        <authorList>
            <person name="Eichinger L."/>
            <person name="Pachebat J.A."/>
            <person name="Gloeckner G."/>
            <person name="Rajandream M.A."/>
            <person name="Sucgang R."/>
            <person name="Berriman M."/>
            <person name="Song J."/>
            <person name="Olsen R."/>
            <person name="Szafranski K."/>
            <person name="Xu Q."/>
            <person name="Tunggal B."/>
            <person name="Kummerfeld S."/>
            <person name="Madera M."/>
            <person name="Konfortov B.A."/>
            <person name="Rivero F."/>
            <person name="Bankier A.T."/>
            <person name="Lehmann R."/>
            <person name="Hamlin N."/>
            <person name="Davies R."/>
            <person name="Gaudet P."/>
            <person name="Fey P."/>
            <person name="Pilcher K."/>
            <person name="Chen G."/>
            <person name="Saunders D."/>
            <person name="Sodergren E.J."/>
            <person name="Davis P."/>
            <person name="Kerhornou A."/>
            <person name="Nie X."/>
            <person name="Hall N."/>
            <person name="Anjard C."/>
            <person name="Hemphill L."/>
            <person name="Bason N."/>
            <person name="Farbrother P."/>
            <person name="Desany B."/>
            <person name="Just E."/>
            <person name="Morio T."/>
            <person name="Rost R."/>
            <person name="Churcher C.M."/>
            <person name="Cooper J."/>
            <person name="Haydock S."/>
            <person name="van Driessche N."/>
            <person name="Cronin A."/>
            <person name="Goodhead I."/>
            <person name="Muzny D.M."/>
            <person name="Mourier T."/>
            <person name="Pain A."/>
            <person name="Lu M."/>
            <person name="Harper D."/>
            <person name="Lindsay R."/>
            <person name="Hauser H."/>
            <person name="James K.D."/>
            <person name="Quiles M."/>
            <person name="Madan Babu M."/>
            <person name="Saito T."/>
            <person name="Buchrieser C."/>
            <person name="Wardroper A."/>
            <person name="Felder M."/>
            <person name="Thangavelu M."/>
            <person name="Johnson D."/>
            <person name="Knights A."/>
            <person name="Loulseged H."/>
            <person name="Mungall K.L."/>
            <person name="Oliver K."/>
            <person name="Price C."/>
            <person name="Quail M.A."/>
            <person name="Urushihara H."/>
            <person name="Hernandez J."/>
            <person name="Rabbinowitsch E."/>
            <person name="Steffen D."/>
            <person name="Sanders M."/>
            <person name="Ma J."/>
            <person name="Kohara Y."/>
            <person name="Sharp S."/>
            <person name="Simmonds M.N."/>
            <person name="Spiegler S."/>
            <person name="Tivey A."/>
            <person name="Sugano S."/>
            <person name="White B."/>
            <person name="Walker D."/>
            <person name="Woodward J.R."/>
            <person name="Winckler T."/>
            <person name="Tanaka Y."/>
            <person name="Shaulsky G."/>
            <person name="Schleicher M."/>
            <person name="Weinstock G.M."/>
            <person name="Rosenthal A."/>
            <person name="Cox E.C."/>
            <person name="Chisholm R.L."/>
            <person name="Gibbs R.A."/>
            <person name="Loomis W.F."/>
            <person name="Platzer M."/>
            <person name="Kay R.R."/>
            <person name="Williams J.G."/>
            <person name="Dear P.H."/>
            <person name="Noegel A.A."/>
            <person name="Barrell B.G."/>
            <person name="Kuspa A."/>
        </authorList>
    </citation>
    <scope>NUCLEOTIDE SEQUENCE [LARGE SCALE GENOMIC DNA]</scope>
    <source>
        <strain>AX4</strain>
    </source>
</reference>
<reference key="2">
    <citation type="journal article" date="2003" name="Eukaryot. Cell">
        <title>Changing patterns of gene expression in Dictyostelium prestalk cell subtypes recognized by in situ hybridization with genes from microarray analyses.</title>
        <authorList>
            <person name="Maeda M."/>
            <person name="Sakamoto H."/>
            <person name="Iranfar N."/>
            <person name="Fuller D."/>
            <person name="Maruo T."/>
            <person name="Ogihara S."/>
            <person name="Morio T."/>
            <person name="Urushihara H."/>
            <person name="Tanaka Y."/>
            <person name="Loomis W.F."/>
        </authorList>
    </citation>
    <scope>DEVELOPMENTAL STAGE [LARGE SCALE ANALYSIS]</scope>
</reference>
<reference key="3">
    <citation type="journal article" date="2004" name="Int. J. Dev. Biol.">
        <title>Identification of new modes of Dd-STATa regulation of gene expression in Dictyostelium by in situ hybridisation.</title>
        <authorList>
            <person name="Shimada N."/>
            <person name="Maeda M."/>
            <person name="Urushihara H."/>
            <person name="Kawata T."/>
        </authorList>
    </citation>
    <scope>IDENTIFICATION</scope>
</reference>
<reference key="4">
    <citation type="journal article" date="2008" name="BMC Genomics">
        <title>Genome-wide transcriptional changes induced by phagocytosis or growth on bacteria in Dictyostelium.</title>
        <authorList>
            <person name="Sillo A."/>
            <person name="Bloomfield G."/>
            <person name="Balest A."/>
            <person name="Balbo A."/>
            <person name="Pergolizzi B."/>
            <person name="Peracino B."/>
            <person name="Skelton J."/>
            <person name="Ivens A."/>
            <person name="Bozzaro S."/>
        </authorList>
    </citation>
    <scope>INDUCTION [LARGE SCALE ANALYSIS]</scope>
</reference>
<organism>
    <name type="scientific">Dictyostelium discoideum</name>
    <name type="common">Social amoeba</name>
    <dbReference type="NCBI Taxonomy" id="44689"/>
    <lineage>
        <taxon>Eukaryota</taxon>
        <taxon>Amoebozoa</taxon>
        <taxon>Evosea</taxon>
        <taxon>Eumycetozoa</taxon>
        <taxon>Dictyostelia</taxon>
        <taxon>Dictyosteliales</taxon>
        <taxon>Dictyosteliaceae</taxon>
        <taxon>Dictyostelium</taxon>
    </lineage>
</organism>
<dbReference type="EMBL" id="AAFI02000057">
    <property type="protein sequence ID" value="EAL65550.1"/>
    <property type="molecule type" value="Genomic_DNA"/>
</dbReference>
<dbReference type="RefSeq" id="XP_638873.1">
    <property type="nucleotide sequence ID" value="XM_633781.1"/>
</dbReference>
<dbReference type="SMR" id="Q54QJ8"/>
<dbReference type="PaxDb" id="44689-DDB0229937"/>
<dbReference type="EnsemblProtists" id="EAL65550">
    <property type="protein sequence ID" value="EAL65550"/>
    <property type="gene ID" value="DDB_G0283871"/>
</dbReference>
<dbReference type="GeneID" id="8624271"/>
<dbReference type="KEGG" id="ddi:DDB_G0283871"/>
<dbReference type="dictyBase" id="DDB_G0283871"/>
<dbReference type="VEuPathDB" id="AmoebaDB:DDB_G0283871"/>
<dbReference type="HOGENOM" id="CLU_1083494_0_0_1"/>
<dbReference type="InParanoid" id="Q54QJ8"/>
<dbReference type="OMA" id="WIATHIA"/>
<dbReference type="PRO" id="PR:Q54QJ8"/>
<dbReference type="Proteomes" id="UP000002195">
    <property type="component" value="Chromosome 4"/>
</dbReference>
<dbReference type="Gene3D" id="1.20.120.520">
    <property type="entry name" value="nmb1532 protein domain like"/>
    <property type="match status" value="1"/>
</dbReference>
<sequence>MEAKTQFELITIKSEDGFDENELSVLLKSDSDFHMNGFIWGHLAAKHVYSKLNSKLKSFEPKSRSEINEMIKAITAVTEFIEVHYYHEEEIAWKFLIEQQQCLSEPLLTIVKPQHTQWTEINNEMKDLVKSLTENQEIKDKSSNGWTESISKVKEILQKLTAMVYKSFYDEERIIIPVVLSSIPKSKQNKLGEKMNETMKNAPTSKFVLGAILDVCKTNKDLDENVKKAIPWAVRKVIFPLALEKNYNWFSEFVEIK</sequence>
<feature type="chain" id="PRO_0000392663" description="Uncharacterized protein DDB_G0283871">
    <location>
        <begin position="1"/>
        <end position="257"/>
    </location>
</feature>
<comment type="developmental stage">
    <text evidence="1">Expressed in prestalk pstO cells but not in pstA cells. Strongly expressed throughout development. Expressed normally in dmtA-null cells.</text>
</comment>
<comment type="induction">
    <text evidence="2">Down-regulated by phagocytic stimuli.</text>
</comment>
<gene>
    <name type="ORF">DDB_G0283871</name>
</gene>
<protein>
    <recommendedName>
        <fullName>Uncharacterized protein DDB_G0283871</fullName>
    </recommendedName>
</protein>
<accession>Q54QJ8</accession>
<name>Y8387_DICDI</name>
<evidence type="ECO:0000269" key="1">
    <source>
    </source>
</evidence>
<evidence type="ECO:0000269" key="2">
    <source>
    </source>
</evidence>